<comment type="function">
    <text evidence="1">An essential GTPase which binds GTP, GDP and possibly (p)ppGpp with moderate affinity, with high nucleotide exchange rates and a fairly low GTP hydrolysis rate. Plays a role in control of the cell cycle, stress response, ribosome biogenesis and in those bacteria that undergo differentiation, in morphogenesis control.</text>
</comment>
<comment type="cofactor">
    <cofactor evidence="1">
        <name>Mg(2+)</name>
        <dbReference type="ChEBI" id="CHEBI:18420"/>
    </cofactor>
</comment>
<comment type="subunit">
    <text evidence="1">Monomer.</text>
</comment>
<comment type="subcellular location">
    <subcellularLocation>
        <location evidence="1">Cytoplasm</location>
    </subcellularLocation>
</comment>
<comment type="similarity">
    <text evidence="1">Belongs to the TRAFAC class OBG-HflX-like GTPase superfamily. OBG GTPase family.</text>
</comment>
<gene>
    <name evidence="1" type="primary">obg</name>
    <name type="ordered locus">gbs1537</name>
</gene>
<accession>Q8E465</accession>
<proteinExistence type="inferred from homology"/>
<evidence type="ECO:0000255" key="1">
    <source>
        <dbReference type="HAMAP-Rule" id="MF_01454"/>
    </source>
</evidence>
<evidence type="ECO:0000255" key="2">
    <source>
        <dbReference type="PROSITE-ProRule" id="PRU01229"/>
    </source>
</evidence>
<evidence type="ECO:0000255" key="3">
    <source>
        <dbReference type="PROSITE-ProRule" id="PRU01231"/>
    </source>
</evidence>
<feature type="chain" id="PRO_0000386290" description="GTPase Obg">
    <location>
        <begin position="1"/>
        <end position="437"/>
    </location>
</feature>
<feature type="domain" description="Obg" evidence="3">
    <location>
        <begin position="2"/>
        <end position="160"/>
    </location>
</feature>
<feature type="domain" description="OBG-type G" evidence="1">
    <location>
        <begin position="161"/>
        <end position="338"/>
    </location>
</feature>
<feature type="domain" description="OCT" evidence="2">
    <location>
        <begin position="359"/>
        <end position="437"/>
    </location>
</feature>
<feature type="binding site" evidence="1">
    <location>
        <begin position="167"/>
        <end position="174"/>
    </location>
    <ligand>
        <name>GTP</name>
        <dbReference type="ChEBI" id="CHEBI:37565"/>
    </ligand>
</feature>
<feature type="binding site" evidence="1">
    <location>
        <position position="174"/>
    </location>
    <ligand>
        <name>Mg(2+)</name>
        <dbReference type="ChEBI" id="CHEBI:18420"/>
    </ligand>
</feature>
<feature type="binding site" evidence="1">
    <location>
        <begin position="192"/>
        <end position="196"/>
    </location>
    <ligand>
        <name>GTP</name>
        <dbReference type="ChEBI" id="CHEBI:37565"/>
    </ligand>
</feature>
<feature type="binding site" evidence="1">
    <location>
        <position position="194"/>
    </location>
    <ligand>
        <name>Mg(2+)</name>
        <dbReference type="ChEBI" id="CHEBI:18420"/>
    </ligand>
</feature>
<feature type="binding site" evidence="1">
    <location>
        <begin position="214"/>
        <end position="217"/>
    </location>
    <ligand>
        <name>GTP</name>
        <dbReference type="ChEBI" id="CHEBI:37565"/>
    </ligand>
</feature>
<feature type="binding site" evidence="1">
    <location>
        <begin position="284"/>
        <end position="287"/>
    </location>
    <ligand>
        <name>GTP</name>
        <dbReference type="ChEBI" id="CHEBI:37565"/>
    </ligand>
</feature>
<feature type="binding site" evidence="1">
    <location>
        <begin position="319"/>
        <end position="321"/>
    </location>
    <ligand>
        <name>GTP</name>
        <dbReference type="ChEBI" id="CHEBI:37565"/>
    </ligand>
</feature>
<reference key="1">
    <citation type="journal article" date="2002" name="Mol. Microbiol.">
        <title>Genome sequence of Streptococcus agalactiae, a pathogen causing invasive neonatal disease.</title>
        <authorList>
            <person name="Glaser P."/>
            <person name="Rusniok C."/>
            <person name="Buchrieser C."/>
            <person name="Chevalier F."/>
            <person name="Frangeul L."/>
            <person name="Msadek T."/>
            <person name="Zouine M."/>
            <person name="Couve E."/>
            <person name="Lalioui L."/>
            <person name="Poyart C."/>
            <person name="Trieu-Cuot P."/>
            <person name="Kunst F."/>
        </authorList>
    </citation>
    <scope>NUCLEOTIDE SEQUENCE [LARGE SCALE GENOMIC DNA]</scope>
    <source>
        <strain>NEM316</strain>
    </source>
</reference>
<keyword id="KW-0963">Cytoplasm</keyword>
<keyword id="KW-0342">GTP-binding</keyword>
<keyword id="KW-0378">Hydrolase</keyword>
<keyword id="KW-0460">Magnesium</keyword>
<keyword id="KW-0479">Metal-binding</keyword>
<keyword id="KW-0547">Nucleotide-binding</keyword>
<sequence length="437" mass="48396">MSMFLDTAKISVKAGRGGDGMVAFRREKYVPNGGPWGGDGGKGGSVIFKVNEGLRTLMDFRYNRNFKAKAGEKGMTKGMHGRGAEDLIVSLPPGTTVRDATTGKVITDLVEHDQEFVVARGGRGGRGNIRFATPRNPAPEIAENGEPGEERELQLELKILADVGLVGFPSVGKSTLLSVVSAAKPKIGAYHFTTIVPNLGMVRTKSGDSFAMADLPGLIEGASQGVGLGTQFLRHIERTRVILHVIDMSASEGRDPYDDYVSINNELETYNLRLMERPQIIVANKMDMPDSEENLAAFKEKLAANYDEFDDMPMIFPISSLAHQGLENLMDATAELLANTEEFLLYDETDMQEDEAYYGFNEDERPFEITRDDDATWVLYGDKLEKLFVMTNMERDESIMKFARQLRGMGVDEALRERGAKDGDIVRIGNFEFEFVD</sequence>
<dbReference type="EC" id="3.6.5.-" evidence="1"/>
<dbReference type="EMBL" id="AL766851">
    <property type="protein sequence ID" value="CAD47196.1"/>
    <property type="molecule type" value="Genomic_DNA"/>
</dbReference>
<dbReference type="SMR" id="Q8E465"/>
<dbReference type="KEGG" id="san:gbs1537"/>
<dbReference type="eggNOG" id="COG0536">
    <property type="taxonomic scope" value="Bacteria"/>
</dbReference>
<dbReference type="HOGENOM" id="CLU_011747_2_1_9"/>
<dbReference type="Proteomes" id="UP000000823">
    <property type="component" value="Chromosome"/>
</dbReference>
<dbReference type="GO" id="GO:0005737">
    <property type="term" value="C:cytoplasm"/>
    <property type="evidence" value="ECO:0007669"/>
    <property type="project" value="UniProtKB-SubCell"/>
</dbReference>
<dbReference type="GO" id="GO:0005525">
    <property type="term" value="F:GTP binding"/>
    <property type="evidence" value="ECO:0007669"/>
    <property type="project" value="UniProtKB-UniRule"/>
</dbReference>
<dbReference type="GO" id="GO:0003924">
    <property type="term" value="F:GTPase activity"/>
    <property type="evidence" value="ECO:0007669"/>
    <property type="project" value="UniProtKB-UniRule"/>
</dbReference>
<dbReference type="GO" id="GO:0000287">
    <property type="term" value="F:magnesium ion binding"/>
    <property type="evidence" value="ECO:0007669"/>
    <property type="project" value="InterPro"/>
</dbReference>
<dbReference type="GO" id="GO:0042254">
    <property type="term" value="P:ribosome biogenesis"/>
    <property type="evidence" value="ECO:0007669"/>
    <property type="project" value="UniProtKB-UniRule"/>
</dbReference>
<dbReference type="CDD" id="cd01898">
    <property type="entry name" value="Obg"/>
    <property type="match status" value="1"/>
</dbReference>
<dbReference type="FunFam" id="2.70.210.12:FF:000001">
    <property type="entry name" value="GTPase Obg"/>
    <property type="match status" value="1"/>
</dbReference>
<dbReference type="FunFam" id="3.40.50.300:FF:000515">
    <property type="entry name" value="GTPase Obg"/>
    <property type="match status" value="1"/>
</dbReference>
<dbReference type="Gene3D" id="3.30.300.350">
    <property type="entry name" value="GTP-binding protein OBG, C-terminal domain"/>
    <property type="match status" value="1"/>
</dbReference>
<dbReference type="Gene3D" id="2.70.210.12">
    <property type="entry name" value="GTP1/OBG domain"/>
    <property type="match status" value="1"/>
</dbReference>
<dbReference type="Gene3D" id="3.40.50.300">
    <property type="entry name" value="P-loop containing nucleotide triphosphate hydrolases"/>
    <property type="match status" value="1"/>
</dbReference>
<dbReference type="HAMAP" id="MF_01454">
    <property type="entry name" value="GTPase_Obg"/>
    <property type="match status" value="1"/>
</dbReference>
<dbReference type="InterPro" id="IPR031167">
    <property type="entry name" value="G_OBG"/>
</dbReference>
<dbReference type="InterPro" id="IPR006073">
    <property type="entry name" value="GTP-bd"/>
</dbReference>
<dbReference type="InterPro" id="IPR014100">
    <property type="entry name" value="GTP-bd_Obg/CgtA"/>
</dbReference>
<dbReference type="InterPro" id="IPR036346">
    <property type="entry name" value="GTP-bd_prot_GTP1/OBG_C_sf"/>
</dbReference>
<dbReference type="InterPro" id="IPR006074">
    <property type="entry name" value="GTP1-OBG_CS"/>
</dbReference>
<dbReference type="InterPro" id="IPR006169">
    <property type="entry name" value="GTP1_OBG_dom"/>
</dbReference>
<dbReference type="InterPro" id="IPR036726">
    <property type="entry name" value="GTP1_OBG_dom_sf"/>
</dbReference>
<dbReference type="InterPro" id="IPR045086">
    <property type="entry name" value="OBG_GTPase"/>
</dbReference>
<dbReference type="InterPro" id="IPR015349">
    <property type="entry name" value="OCT_dom"/>
</dbReference>
<dbReference type="InterPro" id="IPR027417">
    <property type="entry name" value="P-loop_NTPase"/>
</dbReference>
<dbReference type="InterPro" id="IPR005225">
    <property type="entry name" value="Small_GTP-bd"/>
</dbReference>
<dbReference type="NCBIfam" id="TIGR02729">
    <property type="entry name" value="Obg_CgtA"/>
    <property type="match status" value="1"/>
</dbReference>
<dbReference type="NCBIfam" id="TIGR03595">
    <property type="entry name" value="Obg_CgtA_exten"/>
    <property type="match status" value="1"/>
</dbReference>
<dbReference type="NCBIfam" id="NF008954">
    <property type="entry name" value="PRK12296.1"/>
    <property type="match status" value="1"/>
</dbReference>
<dbReference type="NCBIfam" id="NF008955">
    <property type="entry name" value="PRK12297.1"/>
    <property type="match status" value="1"/>
</dbReference>
<dbReference type="NCBIfam" id="NF008956">
    <property type="entry name" value="PRK12299.1"/>
    <property type="match status" value="1"/>
</dbReference>
<dbReference type="NCBIfam" id="TIGR00231">
    <property type="entry name" value="small_GTP"/>
    <property type="match status" value="1"/>
</dbReference>
<dbReference type="PANTHER" id="PTHR11702">
    <property type="entry name" value="DEVELOPMENTALLY REGULATED GTP-BINDING PROTEIN-RELATED"/>
    <property type="match status" value="1"/>
</dbReference>
<dbReference type="PANTHER" id="PTHR11702:SF31">
    <property type="entry name" value="MITOCHONDRIAL RIBOSOME-ASSOCIATED GTPASE 2"/>
    <property type="match status" value="1"/>
</dbReference>
<dbReference type="Pfam" id="PF09269">
    <property type="entry name" value="DUF1967"/>
    <property type="match status" value="1"/>
</dbReference>
<dbReference type="Pfam" id="PF01018">
    <property type="entry name" value="GTP1_OBG"/>
    <property type="match status" value="1"/>
</dbReference>
<dbReference type="Pfam" id="PF01926">
    <property type="entry name" value="MMR_HSR1"/>
    <property type="match status" value="1"/>
</dbReference>
<dbReference type="PIRSF" id="PIRSF002401">
    <property type="entry name" value="GTP_bd_Obg/CgtA"/>
    <property type="match status" value="1"/>
</dbReference>
<dbReference type="PRINTS" id="PR00326">
    <property type="entry name" value="GTP1OBG"/>
</dbReference>
<dbReference type="SUPFAM" id="SSF102741">
    <property type="entry name" value="Obg GTP-binding protein C-terminal domain"/>
    <property type="match status" value="1"/>
</dbReference>
<dbReference type="SUPFAM" id="SSF82051">
    <property type="entry name" value="Obg GTP-binding protein N-terminal domain"/>
    <property type="match status" value="1"/>
</dbReference>
<dbReference type="SUPFAM" id="SSF52540">
    <property type="entry name" value="P-loop containing nucleoside triphosphate hydrolases"/>
    <property type="match status" value="1"/>
</dbReference>
<dbReference type="PROSITE" id="PS51710">
    <property type="entry name" value="G_OBG"/>
    <property type="match status" value="1"/>
</dbReference>
<dbReference type="PROSITE" id="PS00905">
    <property type="entry name" value="GTP1_OBG"/>
    <property type="match status" value="1"/>
</dbReference>
<dbReference type="PROSITE" id="PS51883">
    <property type="entry name" value="OBG"/>
    <property type="match status" value="1"/>
</dbReference>
<dbReference type="PROSITE" id="PS51881">
    <property type="entry name" value="OCT"/>
    <property type="match status" value="1"/>
</dbReference>
<protein>
    <recommendedName>
        <fullName evidence="1">GTPase Obg</fullName>
        <ecNumber evidence="1">3.6.5.-</ecNumber>
    </recommendedName>
    <alternativeName>
        <fullName evidence="1">GTP-binding protein Obg</fullName>
    </alternativeName>
</protein>
<name>OBG_STRA3</name>
<organism>
    <name type="scientific">Streptococcus agalactiae serotype III (strain NEM316)</name>
    <dbReference type="NCBI Taxonomy" id="211110"/>
    <lineage>
        <taxon>Bacteria</taxon>
        <taxon>Bacillati</taxon>
        <taxon>Bacillota</taxon>
        <taxon>Bacilli</taxon>
        <taxon>Lactobacillales</taxon>
        <taxon>Streptococcaceae</taxon>
        <taxon>Streptococcus</taxon>
    </lineage>
</organism>